<comment type="function">
    <text>Antenna complexes are light-harvesting systems, which transfer the excitation energy to the reaction centers.</text>
</comment>
<comment type="subunit">
    <text>The core complex is formed by different alpha and beta chains, binding bacteriochlorophyll molecules, and arranged most probably in tetrameric structures disposed around the reaction center. The non-pigmented gamma chains may constitute additional components.</text>
</comment>
<comment type="subcellular location">
    <subcellularLocation>
        <location>Cell inner membrane</location>
        <topology>Single-pass type II membrane protein</topology>
    </subcellularLocation>
</comment>
<comment type="similarity">
    <text evidence="2">Belongs to the antenna complex alpha subunit family.</text>
</comment>
<evidence type="ECO:0000255" key="1"/>
<evidence type="ECO:0000305" key="2"/>
<feature type="chain" id="PRO_0000099789" description="Light-harvesting protein B-880 alpha chain">
    <location>
        <begin position="1"/>
        <end position="49"/>
    </location>
</feature>
<feature type="topological domain" description="Cytoplasmic" evidence="1">
    <location>
        <begin position="1"/>
        <end position="12"/>
    </location>
</feature>
<feature type="transmembrane region" description="Helical" evidence="1">
    <location>
        <begin position="13"/>
        <end position="33"/>
    </location>
</feature>
<feature type="topological domain" description="Periplasmic" evidence="1">
    <location>
        <begin position="34"/>
        <end position="49"/>
    </location>
</feature>
<feature type="binding site" description="axial binding residue" evidence="1">
    <location>
        <position position="29"/>
    </location>
    <ligand>
        <name>a bacteriochlorophyll</name>
        <dbReference type="ChEBI" id="CHEBI:38201"/>
    </ligand>
    <ligandPart>
        <name>Mg</name>
        <dbReference type="ChEBI" id="CHEBI:25107"/>
    </ligandPart>
</feature>
<organism>
    <name type="scientific">Rhodoblastus acidophilus</name>
    <name type="common">Rhodopseudomonas acidophila</name>
    <dbReference type="NCBI Taxonomy" id="1074"/>
    <lineage>
        <taxon>Bacteria</taxon>
        <taxon>Pseudomonadati</taxon>
        <taxon>Pseudomonadota</taxon>
        <taxon>Alphaproteobacteria</taxon>
        <taxon>Hyphomicrobiales</taxon>
        <taxon>Rhodoblastaceae</taxon>
        <taxon>Rhodoblastus</taxon>
    </lineage>
</organism>
<keyword id="KW-0042">Antenna complex</keyword>
<keyword id="KW-0076">Bacteriochlorophyll</keyword>
<keyword id="KW-0997">Cell inner membrane</keyword>
<keyword id="KW-1003">Cell membrane</keyword>
<keyword id="KW-0148">Chlorophyll</keyword>
<keyword id="KW-0157">Chromophore</keyword>
<keyword id="KW-0903">Direct protein sequencing</keyword>
<keyword id="KW-0437">Light-harvesting polypeptide</keyword>
<keyword id="KW-0460">Magnesium</keyword>
<keyword id="KW-0472">Membrane</keyword>
<keyword id="KW-0479">Metal-binding</keyword>
<keyword id="KW-0812">Transmembrane</keyword>
<keyword id="KW-1133">Transmembrane helix</keyword>
<dbReference type="SMR" id="P35093"/>
<dbReference type="GO" id="GO:0019866">
    <property type="term" value="C:organelle inner membrane"/>
    <property type="evidence" value="ECO:0007669"/>
    <property type="project" value="InterPro"/>
</dbReference>
<dbReference type="GO" id="GO:0005886">
    <property type="term" value="C:plasma membrane"/>
    <property type="evidence" value="ECO:0007669"/>
    <property type="project" value="UniProtKB-SubCell"/>
</dbReference>
<dbReference type="GO" id="GO:0030077">
    <property type="term" value="C:plasma membrane light-harvesting complex"/>
    <property type="evidence" value="ECO:0007669"/>
    <property type="project" value="InterPro"/>
</dbReference>
<dbReference type="GO" id="GO:0042314">
    <property type="term" value="F:bacteriochlorophyll binding"/>
    <property type="evidence" value="ECO:0007669"/>
    <property type="project" value="UniProtKB-KW"/>
</dbReference>
<dbReference type="GO" id="GO:0045156">
    <property type="term" value="F:electron transporter, transferring electrons within the cyclic electron transport pathway of photosynthesis activity"/>
    <property type="evidence" value="ECO:0007669"/>
    <property type="project" value="InterPro"/>
</dbReference>
<dbReference type="GO" id="GO:0046872">
    <property type="term" value="F:metal ion binding"/>
    <property type="evidence" value="ECO:0007669"/>
    <property type="project" value="UniProtKB-KW"/>
</dbReference>
<dbReference type="GO" id="GO:0019684">
    <property type="term" value="P:photosynthesis, light reaction"/>
    <property type="evidence" value="ECO:0007669"/>
    <property type="project" value="InterPro"/>
</dbReference>
<dbReference type="Gene3D" id="4.10.220.20">
    <property type="entry name" value="Light-harvesting complex"/>
    <property type="match status" value="1"/>
</dbReference>
<dbReference type="InterPro" id="IPR000066">
    <property type="entry name" value="Antenna_a/b"/>
</dbReference>
<dbReference type="InterPro" id="IPR018332">
    <property type="entry name" value="Antenna_alpha"/>
</dbReference>
<dbReference type="InterPro" id="IPR002361">
    <property type="entry name" value="Antenna_alpha_CS"/>
</dbReference>
<dbReference type="InterPro" id="IPR035889">
    <property type="entry name" value="Light-harvesting_complex"/>
</dbReference>
<dbReference type="NCBIfam" id="NF040861">
    <property type="entry name" value="pufA_517_ASD"/>
    <property type="match status" value="1"/>
</dbReference>
<dbReference type="Pfam" id="PF00556">
    <property type="entry name" value="LHC"/>
    <property type="match status" value="1"/>
</dbReference>
<dbReference type="PRINTS" id="PR00673">
    <property type="entry name" value="LIGHTHARVSTA"/>
</dbReference>
<dbReference type="SUPFAM" id="SSF56918">
    <property type="entry name" value="Light-harvesting complex subunits"/>
    <property type="match status" value="1"/>
</dbReference>
<dbReference type="PROSITE" id="PS00968">
    <property type="entry name" value="ANTENNA_COMP_ALPHA"/>
    <property type="match status" value="1"/>
</dbReference>
<protein>
    <recommendedName>
        <fullName>Light-harvesting protein B-880 alpha chain</fullName>
    </recommendedName>
    <alternativeName>
        <fullName>Antenna pigment protein alpha chain</fullName>
    </alternativeName>
</protein>
<reference key="1">
    <citation type="journal article" date="1992" name="Eur. J. Biochem.">
        <title>The primary structure of the antenna polypeptides of Ectothiorhodospira halochloris and Ectothiorhodospira halophila. Four core-type antenna polypeptides in E. halochloris and E. halophila.</title>
        <authorList>
            <person name="Wagner-Huber R."/>
            <person name="Brunisholz R.A."/>
            <person name="Bissig I."/>
            <person name="Frank G."/>
            <person name="Suter F."/>
            <person name="Zuber H."/>
        </authorList>
    </citation>
    <scope>PROTEIN SEQUENCE</scope>
    <source>
        <strain>DSM 141 / 7750 / LMG 4302</strain>
    </source>
</reference>
<proteinExistence type="evidence at protein level"/>
<name>LHA7_RHOAC</name>
<accession>P35093</accession>
<sequence length="49" mass="5737">MYKLWLLFDPRRTLVALSAFLFVLGLIIHFISLSTDRFNWLEGKPAVRA</sequence>